<proteinExistence type="inferred from homology"/>
<gene>
    <name evidence="1" type="primary">hslV</name>
    <name type="ordered locus">Bcen_2477</name>
</gene>
<comment type="function">
    <text evidence="1">Protease subunit of a proteasome-like degradation complex believed to be a general protein degrading machinery.</text>
</comment>
<comment type="catalytic activity">
    <reaction evidence="1">
        <text>ATP-dependent cleavage of peptide bonds with broad specificity.</text>
        <dbReference type="EC" id="3.4.25.2"/>
    </reaction>
</comment>
<comment type="activity regulation">
    <text evidence="1">Allosterically activated by HslU binding.</text>
</comment>
<comment type="subunit">
    <text evidence="1">A double ring-shaped homohexamer of HslV is capped on each side by a ring-shaped HslU homohexamer. The assembly of the HslU/HslV complex is dependent on binding of ATP.</text>
</comment>
<comment type="subcellular location">
    <subcellularLocation>
        <location evidence="1">Cytoplasm</location>
    </subcellularLocation>
</comment>
<comment type="similarity">
    <text evidence="1">Belongs to the peptidase T1B family. HslV subfamily.</text>
</comment>
<name>HSLV_BURO1</name>
<keyword id="KW-0021">Allosteric enzyme</keyword>
<keyword id="KW-0963">Cytoplasm</keyword>
<keyword id="KW-0378">Hydrolase</keyword>
<keyword id="KW-0479">Metal-binding</keyword>
<keyword id="KW-0645">Protease</keyword>
<keyword id="KW-0915">Sodium</keyword>
<keyword id="KW-0888">Threonine protease</keyword>
<evidence type="ECO:0000255" key="1">
    <source>
        <dbReference type="HAMAP-Rule" id="MF_00248"/>
    </source>
</evidence>
<organism>
    <name type="scientific">Burkholderia orbicola (strain AU 1054)</name>
    <dbReference type="NCBI Taxonomy" id="331271"/>
    <lineage>
        <taxon>Bacteria</taxon>
        <taxon>Pseudomonadati</taxon>
        <taxon>Pseudomonadota</taxon>
        <taxon>Betaproteobacteria</taxon>
        <taxon>Burkholderiales</taxon>
        <taxon>Burkholderiaceae</taxon>
        <taxon>Burkholderia</taxon>
        <taxon>Burkholderia cepacia complex</taxon>
        <taxon>Burkholderia orbicola</taxon>
    </lineage>
</organism>
<accession>Q1BSM9</accession>
<sequence>MEQFHGTTIVSVRRGDKVALGGDGQVTLGNIVMKGGARKVRRIYNNQVLVGFAGGTADAFSLLDRFEAKLEKHQGNLTRAAVELAKDWRTDRMLRRLEAMLITADATTTLVITGNGDVLDPEGGICAIGSGGAYAQAAARALVENTDLSPRDIVEKSLGIAGDMCIYTNHNRIIETIE</sequence>
<reference key="1">
    <citation type="submission" date="2006-05" db="EMBL/GenBank/DDBJ databases">
        <title>Complete sequence of chromosome 1 of Burkholderia cenocepacia AU 1054.</title>
        <authorList>
            <consortium name="US DOE Joint Genome Institute"/>
            <person name="Copeland A."/>
            <person name="Lucas S."/>
            <person name="Lapidus A."/>
            <person name="Barry K."/>
            <person name="Detter J.C."/>
            <person name="Glavina del Rio T."/>
            <person name="Hammon N."/>
            <person name="Israni S."/>
            <person name="Dalin E."/>
            <person name="Tice H."/>
            <person name="Pitluck S."/>
            <person name="Chain P."/>
            <person name="Malfatti S."/>
            <person name="Shin M."/>
            <person name="Vergez L."/>
            <person name="Schmutz J."/>
            <person name="Larimer F."/>
            <person name="Land M."/>
            <person name="Hauser L."/>
            <person name="Kyrpides N."/>
            <person name="Lykidis A."/>
            <person name="LiPuma J.J."/>
            <person name="Konstantinidis K."/>
            <person name="Tiedje J.M."/>
            <person name="Richardson P."/>
        </authorList>
    </citation>
    <scope>NUCLEOTIDE SEQUENCE [LARGE SCALE GENOMIC DNA]</scope>
    <source>
        <strain>AU 1054</strain>
    </source>
</reference>
<dbReference type="EC" id="3.4.25.2" evidence="1"/>
<dbReference type="EMBL" id="CP000378">
    <property type="protein sequence ID" value="ABF77376.1"/>
    <property type="molecule type" value="Genomic_DNA"/>
</dbReference>
<dbReference type="SMR" id="Q1BSM9"/>
<dbReference type="MEROPS" id="T01.006"/>
<dbReference type="HOGENOM" id="CLU_093872_1_0_4"/>
<dbReference type="GO" id="GO:0009376">
    <property type="term" value="C:HslUV protease complex"/>
    <property type="evidence" value="ECO:0007669"/>
    <property type="project" value="UniProtKB-UniRule"/>
</dbReference>
<dbReference type="GO" id="GO:0005839">
    <property type="term" value="C:proteasome core complex"/>
    <property type="evidence" value="ECO:0007669"/>
    <property type="project" value="InterPro"/>
</dbReference>
<dbReference type="GO" id="GO:0046872">
    <property type="term" value="F:metal ion binding"/>
    <property type="evidence" value="ECO:0007669"/>
    <property type="project" value="UniProtKB-KW"/>
</dbReference>
<dbReference type="GO" id="GO:0004298">
    <property type="term" value="F:threonine-type endopeptidase activity"/>
    <property type="evidence" value="ECO:0007669"/>
    <property type="project" value="UniProtKB-KW"/>
</dbReference>
<dbReference type="GO" id="GO:0051603">
    <property type="term" value="P:proteolysis involved in protein catabolic process"/>
    <property type="evidence" value="ECO:0007669"/>
    <property type="project" value="InterPro"/>
</dbReference>
<dbReference type="CDD" id="cd01913">
    <property type="entry name" value="protease_HslV"/>
    <property type="match status" value="1"/>
</dbReference>
<dbReference type="FunFam" id="3.60.20.10:FF:000002">
    <property type="entry name" value="ATP-dependent protease subunit HslV"/>
    <property type="match status" value="1"/>
</dbReference>
<dbReference type="Gene3D" id="3.60.20.10">
    <property type="entry name" value="Glutamine Phosphoribosylpyrophosphate, subunit 1, domain 1"/>
    <property type="match status" value="1"/>
</dbReference>
<dbReference type="HAMAP" id="MF_00248">
    <property type="entry name" value="HslV"/>
    <property type="match status" value="1"/>
</dbReference>
<dbReference type="InterPro" id="IPR022281">
    <property type="entry name" value="ATP-dep_Prtase_HsIV_su"/>
</dbReference>
<dbReference type="InterPro" id="IPR029055">
    <property type="entry name" value="Ntn_hydrolases_N"/>
</dbReference>
<dbReference type="InterPro" id="IPR001353">
    <property type="entry name" value="Proteasome_sua/b"/>
</dbReference>
<dbReference type="InterPro" id="IPR023333">
    <property type="entry name" value="Proteasome_suB-type"/>
</dbReference>
<dbReference type="NCBIfam" id="TIGR03692">
    <property type="entry name" value="ATP_dep_HslV"/>
    <property type="match status" value="1"/>
</dbReference>
<dbReference type="NCBIfam" id="NF003964">
    <property type="entry name" value="PRK05456.1"/>
    <property type="match status" value="1"/>
</dbReference>
<dbReference type="PANTHER" id="PTHR32194:SF0">
    <property type="entry name" value="ATP-DEPENDENT PROTEASE SUBUNIT HSLV"/>
    <property type="match status" value="1"/>
</dbReference>
<dbReference type="PANTHER" id="PTHR32194">
    <property type="entry name" value="METALLOPROTEASE TLDD"/>
    <property type="match status" value="1"/>
</dbReference>
<dbReference type="Pfam" id="PF00227">
    <property type="entry name" value="Proteasome"/>
    <property type="match status" value="1"/>
</dbReference>
<dbReference type="PIRSF" id="PIRSF039093">
    <property type="entry name" value="HslV"/>
    <property type="match status" value="1"/>
</dbReference>
<dbReference type="SUPFAM" id="SSF56235">
    <property type="entry name" value="N-terminal nucleophile aminohydrolases (Ntn hydrolases)"/>
    <property type="match status" value="1"/>
</dbReference>
<dbReference type="PROSITE" id="PS51476">
    <property type="entry name" value="PROTEASOME_BETA_2"/>
    <property type="match status" value="1"/>
</dbReference>
<protein>
    <recommendedName>
        <fullName evidence="1">ATP-dependent protease subunit HslV</fullName>
        <ecNumber evidence="1">3.4.25.2</ecNumber>
    </recommendedName>
</protein>
<feature type="chain" id="PRO_1000012589" description="ATP-dependent protease subunit HslV">
    <location>
        <begin position="1"/>
        <end position="178"/>
    </location>
</feature>
<feature type="active site" evidence="1">
    <location>
        <position position="7"/>
    </location>
</feature>
<feature type="binding site" evidence="1">
    <location>
        <position position="162"/>
    </location>
    <ligand>
        <name>Na(+)</name>
        <dbReference type="ChEBI" id="CHEBI:29101"/>
    </ligand>
</feature>
<feature type="binding site" evidence="1">
    <location>
        <position position="165"/>
    </location>
    <ligand>
        <name>Na(+)</name>
        <dbReference type="ChEBI" id="CHEBI:29101"/>
    </ligand>
</feature>
<feature type="binding site" evidence="1">
    <location>
        <position position="168"/>
    </location>
    <ligand>
        <name>Na(+)</name>
        <dbReference type="ChEBI" id="CHEBI:29101"/>
    </ligand>
</feature>